<sequence length="319" mass="34091">MARKKITLVGAGNIGGTLAHLALIKQLGDVVLFDIAQGMPNGKALDLLQTCPIEGVDFKVRGTNDYKDLENSDVVIVTAGVPRKPGMSRDDLLGINIKVMQTVGEGIKHNCPNAFVICITNPLDIMVNMLQKFSGVPDNKIVGMAGVLDSARFRTFLADELNVSVQQVQAYVMGGHGDTMVPLTKMSNVAGVSLEQLVKEGKLKQERLDAIVSRTRSGGGEIVALLKTGSAYYAPAAAGIQMAESFLKDKKMILPCAAKVKAGMYGLDEDLFVGVPTEISANGVRPIEVEISDKEREQLQVSINAIKDLNKAAAEILAK</sequence>
<reference key="1">
    <citation type="journal article" date="2007" name="PLoS ONE">
        <title>Genome sequencing shows that European isolates of Francisella tularensis subspecies tularensis are almost identical to US laboratory strain Schu S4.</title>
        <authorList>
            <person name="Chaudhuri R.R."/>
            <person name="Ren C.-P."/>
            <person name="Desmond L."/>
            <person name="Vincent G.A."/>
            <person name="Silman N.J."/>
            <person name="Brehm J.K."/>
            <person name="Elmore M.J."/>
            <person name="Hudson M.J."/>
            <person name="Forsman M."/>
            <person name="Isherwood K.E."/>
            <person name="Gurycova D."/>
            <person name="Minton N.P."/>
            <person name="Titball R.W."/>
            <person name="Pallen M.J."/>
            <person name="Vipond R."/>
        </authorList>
    </citation>
    <scope>NUCLEOTIDE SEQUENCE [LARGE SCALE GENOMIC DNA]</scope>
    <source>
        <strain>FSC 198</strain>
    </source>
</reference>
<name>MDH_FRAT1</name>
<organism>
    <name type="scientific">Francisella tularensis subsp. tularensis (strain FSC 198)</name>
    <dbReference type="NCBI Taxonomy" id="393115"/>
    <lineage>
        <taxon>Bacteria</taxon>
        <taxon>Pseudomonadati</taxon>
        <taxon>Pseudomonadota</taxon>
        <taxon>Gammaproteobacteria</taxon>
        <taxon>Thiotrichales</taxon>
        <taxon>Francisellaceae</taxon>
        <taxon>Francisella</taxon>
    </lineage>
</organism>
<comment type="function">
    <text evidence="1">Catalyzes the reversible oxidation of malate to oxaloacetate.</text>
</comment>
<comment type="catalytic activity">
    <reaction evidence="1">
        <text>(S)-malate + NAD(+) = oxaloacetate + NADH + H(+)</text>
        <dbReference type="Rhea" id="RHEA:21432"/>
        <dbReference type="ChEBI" id="CHEBI:15378"/>
        <dbReference type="ChEBI" id="CHEBI:15589"/>
        <dbReference type="ChEBI" id="CHEBI:16452"/>
        <dbReference type="ChEBI" id="CHEBI:57540"/>
        <dbReference type="ChEBI" id="CHEBI:57945"/>
        <dbReference type="EC" id="1.1.1.37"/>
    </reaction>
</comment>
<comment type="similarity">
    <text evidence="1">Belongs to the LDH/MDH superfamily. MDH type 3 family.</text>
</comment>
<evidence type="ECO:0000255" key="1">
    <source>
        <dbReference type="HAMAP-Rule" id="MF_00487"/>
    </source>
</evidence>
<proteinExistence type="inferred from homology"/>
<accession>Q14IT0</accession>
<feature type="chain" id="PRO_1000026471" description="Malate dehydrogenase">
    <location>
        <begin position="1"/>
        <end position="319"/>
    </location>
</feature>
<feature type="active site" description="Proton acceptor" evidence="1">
    <location>
        <position position="176"/>
    </location>
</feature>
<feature type="binding site" evidence="1">
    <location>
        <begin position="10"/>
        <end position="15"/>
    </location>
    <ligand>
        <name>NAD(+)</name>
        <dbReference type="ChEBI" id="CHEBI:57540"/>
    </ligand>
</feature>
<feature type="binding site" evidence="1">
    <location>
        <position position="34"/>
    </location>
    <ligand>
        <name>NAD(+)</name>
        <dbReference type="ChEBI" id="CHEBI:57540"/>
    </ligand>
</feature>
<feature type="binding site" evidence="1">
    <location>
        <position position="83"/>
    </location>
    <ligand>
        <name>substrate</name>
    </ligand>
</feature>
<feature type="binding site" evidence="1">
    <location>
        <position position="89"/>
    </location>
    <ligand>
        <name>substrate</name>
    </ligand>
</feature>
<feature type="binding site" evidence="1">
    <location>
        <position position="96"/>
    </location>
    <ligand>
        <name>NAD(+)</name>
        <dbReference type="ChEBI" id="CHEBI:57540"/>
    </ligand>
</feature>
<feature type="binding site" evidence="1">
    <location>
        <begin position="119"/>
        <end position="121"/>
    </location>
    <ligand>
        <name>NAD(+)</name>
        <dbReference type="ChEBI" id="CHEBI:57540"/>
    </ligand>
</feature>
<feature type="binding site" evidence="1">
    <location>
        <position position="121"/>
    </location>
    <ligand>
        <name>substrate</name>
    </ligand>
</feature>
<feature type="binding site" evidence="1">
    <location>
        <position position="152"/>
    </location>
    <ligand>
        <name>substrate</name>
    </ligand>
</feature>
<keyword id="KW-0520">NAD</keyword>
<keyword id="KW-0560">Oxidoreductase</keyword>
<keyword id="KW-0816">Tricarboxylic acid cycle</keyword>
<dbReference type="EC" id="1.1.1.37" evidence="1"/>
<dbReference type="EMBL" id="AM286280">
    <property type="protein sequence ID" value="CAL08551.1"/>
    <property type="molecule type" value="Genomic_DNA"/>
</dbReference>
<dbReference type="RefSeq" id="WP_003026154.1">
    <property type="nucleotide sequence ID" value="NC_008245.1"/>
</dbReference>
<dbReference type="SMR" id="Q14IT0"/>
<dbReference type="KEGG" id="ftf:FTF0535c"/>
<dbReference type="HOGENOM" id="CLU_045401_2_1_6"/>
<dbReference type="GO" id="GO:0004459">
    <property type="term" value="F:L-lactate dehydrogenase activity"/>
    <property type="evidence" value="ECO:0007669"/>
    <property type="project" value="TreeGrafter"/>
</dbReference>
<dbReference type="GO" id="GO:0030060">
    <property type="term" value="F:L-malate dehydrogenase (NAD+) activity"/>
    <property type="evidence" value="ECO:0007669"/>
    <property type="project" value="UniProtKB-UniRule"/>
</dbReference>
<dbReference type="GO" id="GO:0006089">
    <property type="term" value="P:lactate metabolic process"/>
    <property type="evidence" value="ECO:0007669"/>
    <property type="project" value="TreeGrafter"/>
</dbReference>
<dbReference type="GO" id="GO:0006099">
    <property type="term" value="P:tricarboxylic acid cycle"/>
    <property type="evidence" value="ECO:0007669"/>
    <property type="project" value="UniProtKB-UniRule"/>
</dbReference>
<dbReference type="CDD" id="cd01339">
    <property type="entry name" value="LDH-like_MDH"/>
    <property type="match status" value="1"/>
</dbReference>
<dbReference type="FunFam" id="3.40.50.720:FF:000018">
    <property type="entry name" value="Malate dehydrogenase"/>
    <property type="match status" value="1"/>
</dbReference>
<dbReference type="FunFam" id="3.90.110.10:FF:000004">
    <property type="entry name" value="Malate dehydrogenase"/>
    <property type="match status" value="1"/>
</dbReference>
<dbReference type="Gene3D" id="3.90.110.10">
    <property type="entry name" value="Lactate dehydrogenase/glycoside hydrolase, family 4, C-terminal"/>
    <property type="match status" value="1"/>
</dbReference>
<dbReference type="Gene3D" id="3.40.50.720">
    <property type="entry name" value="NAD(P)-binding Rossmann-like Domain"/>
    <property type="match status" value="1"/>
</dbReference>
<dbReference type="HAMAP" id="MF_00487">
    <property type="entry name" value="Malate_dehydrog_3"/>
    <property type="match status" value="1"/>
</dbReference>
<dbReference type="InterPro" id="IPR001557">
    <property type="entry name" value="L-lactate/malate_DH"/>
</dbReference>
<dbReference type="InterPro" id="IPR022383">
    <property type="entry name" value="Lactate/malate_DH_C"/>
</dbReference>
<dbReference type="InterPro" id="IPR001236">
    <property type="entry name" value="Lactate/malate_DH_N"/>
</dbReference>
<dbReference type="InterPro" id="IPR015955">
    <property type="entry name" value="Lactate_DH/Glyco_Ohase_4_C"/>
</dbReference>
<dbReference type="InterPro" id="IPR011275">
    <property type="entry name" value="Malate_DH_type3"/>
</dbReference>
<dbReference type="InterPro" id="IPR036291">
    <property type="entry name" value="NAD(P)-bd_dom_sf"/>
</dbReference>
<dbReference type="NCBIfam" id="TIGR01763">
    <property type="entry name" value="MalateDH_bact"/>
    <property type="match status" value="1"/>
</dbReference>
<dbReference type="NCBIfam" id="NF004863">
    <property type="entry name" value="PRK06223.1"/>
    <property type="match status" value="1"/>
</dbReference>
<dbReference type="PANTHER" id="PTHR43128">
    <property type="entry name" value="L-2-HYDROXYCARBOXYLATE DEHYDROGENASE (NAD(P)(+))"/>
    <property type="match status" value="1"/>
</dbReference>
<dbReference type="PANTHER" id="PTHR43128:SF16">
    <property type="entry name" value="L-LACTATE DEHYDROGENASE"/>
    <property type="match status" value="1"/>
</dbReference>
<dbReference type="Pfam" id="PF02866">
    <property type="entry name" value="Ldh_1_C"/>
    <property type="match status" value="1"/>
</dbReference>
<dbReference type="Pfam" id="PF00056">
    <property type="entry name" value="Ldh_1_N"/>
    <property type="match status" value="1"/>
</dbReference>
<dbReference type="PIRSF" id="PIRSF000102">
    <property type="entry name" value="Lac_mal_DH"/>
    <property type="match status" value="1"/>
</dbReference>
<dbReference type="PRINTS" id="PR00086">
    <property type="entry name" value="LLDHDRGNASE"/>
</dbReference>
<dbReference type="SUPFAM" id="SSF56327">
    <property type="entry name" value="LDH C-terminal domain-like"/>
    <property type="match status" value="1"/>
</dbReference>
<dbReference type="SUPFAM" id="SSF51735">
    <property type="entry name" value="NAD(P)-binding Rossmann-fold domains"/>
    <property type="match status" value="1"/>
</dbReference>
<protein>
    <recommendedName>
        <fullName evidence="1">Malate dehydrogenase</fullName>
        <ecNumber evidence="1">1.1.1.37</ecNumber>
    </recommendedName>
</protein>
<gene>
    <name evidence="1" type="primary">mdh</name>
    <name type="ordered locus">FTF0535c</name>
</gene>